<accession>Q9ESH6</accession>
<accession>Q99PB7</accession>
<name>GLRX1_RAT</name>
<dbReference type="EMBL" id="AF167981">
    <property type="protein sequence ID" value="AAF89637.3"/>
    <property type="molecule type" value="mRNA"/>
</dbReference>
<dbReference type="EMBL" id="AF319950">
    <property type="protein sequence ID" value="AAK07419.1"/>
    <property type="molecule type" value="mRNA"/>
</dbReference>
<dbReference type="EMBL" id="BC061555">
    <property type="protein sequence ID" value="AAH61555.1"/>
    <property type="molecule type" value="mRNA"/>
</dbReference>
<dbReference type="RefSeq" id="NP_071614.1">
    <property type="nucleotide sequence ID" value="NM_022278.1"/>
</dbReference>
<dbReference type="RefSeq" id="XP_038958961.1">
    <property type="nucleotide sequence ID" value="XM_039103033.2"/>
</dbReference>
<dbReference type="SMR" id="Q9ESH6"/>
<dbReference type="FunCoup" id="Q9ESH6">
    <property type="interactions" value="804"/>
</dbReference>
<dbReference type="STRING" id="10116.ENSRNOP00000016372"/>
<dbReference type="iPTMnet" id="Q9ESH6"/>
<dbReference type="PhosphoSitePlus" id="Q9ESH6"/>
<dbReference type="SwissPalm" id="Q9ESH6"/>
<dbReference type="PaxDb" id="10116-ENSRNOP00000016372"/>
<dbReference type="Ensembl" id="ENSRNOT00000016372.6">
    <property type="protein sequence ID" value="ENSRNOP00000016372.2"/>
    <property type="gene ID" value="ENSRNOG00000012183.6"/>
</dbReference>
<dbReference type="GeneID" id="64045"/>
<dbReference type="KEGG" id="rno:64045"/>
<dbReference type="UCSC" id="RGD:70951">
    <property type="organism name" value="rat"/>
</dbReference>
<dbReference type="AGR" id="RGD:70951"/>
<dbReference type="CTD" id="2745"/>
<dbReference type="RGD" id="70951">
    <property type="gene designation" value="Glrx"/>
</dbReference>
<dbReference type="eggNOG" id="KOG1752">
    <property type="taxonomic scope" value="Eukaryota"/>
</dbReference>
<dbReference type="GeneTree" id="ENSGT00900000141068"/>
<dbReference type="HOGENOM" id="CLU_026126_7_2_1"/>
<dbReference type="InParanoid" id="Q9ESH6"/>
<dbReference type="OMA" id="KPGHLEC"/>
<dbReference type="OrthoDB" id="418495at2759"/>
<dbReference type="PhylomeDB" id="Q9ESH6"/>
<dbReference type="TreeFam" id="TF326994"/>
<dbReference type="Reactome" id="R-RNO-499943">
    <property type="pathway name" value="Interconversion of nucleotide di- and triphosphates"/>
</dbReference>
<dbReference type="PRO" id="PR:Q9ESH6"/>
<dbReference type="Proteomes" id="UP000002494">
    <property type="component" value="Chromosome 2"/>
</dbReference>
<dbReference type="Bgee" id="ENSRNOG00000012183">
    <property type="expression patterns" value="Expressed in esophagus and 19 other cell types or tissues"/>
</dbReference>
<dbReference type="GO" id="GO:0005737">
    <property type="term" value="C:cytoplasm"/>
    <property type="evidence" value="ECO:0000266"/>
    <property type="project" value="RGD"/>
</dbReference>
<dbReference type="GO" id="GO:0030425">
    <property type="term" value="C:dendrite"/>
    <property type="evidence" value="ECO:0000314"/>
    <property type="project" value="RGD"/>
</dbReference>
<dbReference type="GO" id="GO:0043025">
    <property type="term" value="C:neuronal cell body"/>
    <property type="evidence" value="ECO:0000314"/>
    <property type="project" value="RGD"/>
</dbReference>
<dbReference type="GO" id="GO:0005634">
    <property type="term" value="C:nucleus"/>
    <property type="evidence" value="ECO:0000266"/>
    <property type="project" value="RGD"/>
</dbReference>
<dbReference type="GO" id="GO:0015038">
    <property type="term" value="F:glutathione disulfide oxidoreductase activity"/>
    <property type="evidence" value="ECO:0000314"/>
    <property type="project" value="RGD"/>
</dbReference>
<dbReference type="GO" id="GO:0017080">
    <property type="term" value="F:sodium channel regulator activity"/>
    <property type="evidence" value="ECO:0000266"/>
    <property type="project" value="RGD"/>
</dbReference>
<dbReference type="GO" id="GO:0071392">
    <property type="term" value="P:cellular response to estradiol stimulus"/>
    <property type="evidence" value="ECO:0000314"/>
    <property type="project" value="RGD"/>
</dbReference>
<dbReference type="GO" id="GO:0071333">
    <property type="term" value="P:cellular response to glucose stimulus"/>
    <property type="evidence" value="ECO:0000270"/>
    <property type="project" value="RGD"/>
</dbReference>
<dbReference type="GO" id="GO:1901299">
    <property type="term" value="P:negative regulation of hydrogen peroxide-mediated programmed cell death"/>
    <property type="evidence" value="ECO:0000315"/>
    <property type="project" value="RGD"/>
</dbReference>
<dbReference type="GO" id="GO:2000587">
    <property type="term" value="P:negative regulation of platelet-derived growth factor receptor-beta signaling pathway"/>
    <property type="evidence" value="ECO:0000315"/>
    <property type="project" value="RGD"/>
</dbReference>
<dbReference type="GO" id="GO:0022602">
    <property type="term" value="P:ovulation cycle process"/>
    <property type="evidence" value="ECO:0000270"/>
    <property type="project" value="RGD"/>
</dbReference>
<dbReference type="GO" id="GO:0060355">
    <property type="term" value="P:positive regulation of cell adhesion molecule production"/>
    <property type="evidence" value="ECO:0000315"/>
    <property type="project" value="RGD"/>
</dbReference>
<dbReference type="GO" id="GO:0045921">
    <property type="term" value="P:positive regulation of exocytosis"/>
    <property type="evidence" value="ECO:0000315"/>
    <property type="project" value="RGD"/>
</dbReference>
<dbReference type="GO" id="GO:0032024">
    <property type="term" value="P:positive regulation of insulin secretion"/>
    <property type="evidence" value="ECO:0000315"/>
    <property type="project" value="RGD"/>
</dbReference>
<dbReference type="GO" id="GO:0045838">
    <property type="term" value="P:positive regulation of membrane potential"/>
    <property type="evidence" value="ECO:0000266"/>
    <property type="project" value="RGD"/>
</dbReference>
<dbReference type="GO" id="GO:1901224">
    <property type="term" value="P:positive regulation of non-canonical NF-kappaB signal transduction"/>
    <property type="evidence" value="ECO:0000315"/>
    <property type="project" value="RGD"/>
</dbReference>
<dbReference type="GO" id="GO:0002931">
    <property type="term" value="P:response to ischemia"/>
    <property type="evidence" value="ECO:0000270"/>
    <property type="project" value="RGD"/>
</dbReference>
<dbReference type="CDD" id="cd03419">
    <property type="entry name" value="GRX_GRXh_1_2_like"/>
    <property type="match status" value="1"/>
</dbReference>
<dbReference type="FunFam" id="3.40.30.10:FF:000214">
    <property type="entry name" value="glutaredoxin-1 isoform X1"/>
    <property type="match status" value="1"/>
</dbReference>
<dbReference type="Gene3D" id="3.40.30.10">
    <property type="entry name" value="Glutaredoxin"/>
    <property type="match status" value="1"/>
</dbReference>
<dbReference type="InterPro" id="IPR011767">
    <property type="entry name" value="GLR_AS"/>
</dbReference>
<dbReference type="InterPro" id="IPR047185">
    <property type="entry name" value="GLRX1"/>
</dbReference>
<dbReference type="InterPro" id="IPR002109">
    <property type="entry name" value="Glutaredoxin"/>
</dbReference>
<dbReference type="InterPro" id="IPR011899">
    <property type="entry name" value="Glutaredoxin_euk/vir"/>
</dbReference>
<dbReference type="InterPro" id="IPR014025">
    <property type="entry name" value="Glutaredoxin_subgr"/>
</dbReference>
<dbReference type="InterPro" id="IPR036249">
    <property type="entry name" value="Thioredoxin-like_sf"/>
</dbReference>
<dbReference type="NCBIfam" id="TIGR02180">
    <property type="entry name" value="GRX_euk"/>
    <property type="match status" value="1"/>
</dbReference>
<dbReference type="PANTHER" id="PTHR46185">
    <property type="entry name" value="GLUTAREDOXIN-1"/>
    <property type="match status" value="1"/>
</dbReference>
<dbReference type="PANTHER" id="PTHR46185:SF1">
    <property type="entry name" value="GLUTAREDOXIN-1"/>
    <property type="match status" value="1"/>
</dbReference>
<dbReference type="Pfam" id="PF00462">
    <property type="entry name" value="Glutaredoxin"/>
    <property type="match status" value="1"/>
</dbReference>
<dbReference type="PRINTS" id="PR00160">
    <property type="entry name" value="GLUTAREDOXIN"/>
</dbReference>
<dbReference type="SUPFAM" id="SSF52833">
    <property type="entry name" value="Thioredoxin-like"/>
    <property type="match status" value="1"/>
</dbReference>
<dbReference type="PROSITE" id="PS00195">
    <property type="entry name" value="GLUTAREDOXIN_1"/>
    <property type="match status" value="1"/>
</dbReference>
<dbReference type="PROSITE" id="PS51354">
    <property type="entry name" value="GLUTAREDOXIN_2"/>
    <property type="match status" value="1"/>
</dbReference>
<reference key="1">
    <citation type="submission" date="2000-09" db="EMBL/GenBank/DDBJ databases">
        <title>Cloning of rat glutaredoxin.</title>
        <authorList>
            <person name="Miranda-Vizuete A."/>
        </authorList>
    </citation>
    <scope>NUCLEOTIDE SEQUENCE [MRNA]</scope>
</reference>
<reference key="2">
    <citation type="submission" date="2000-11" db="EMBL/GenBank/DDBJ databases">
        <title>Cloning and expression of glutaredoxin cDNA gene from PC12 cell line in E.coli.</title>
        <authorList>
            <person name="Liu C.Z."/>
            <person name="Xie Z.H."/>
            <person name="He Y.H."/>
            <person name="Wang A.M."/>
            <person name="Ma C."/>
        </authorList>
    </citation>
    <scope>NUCLEOTIDE SEQUENCE [MRNA]</scope>
</reference>
<reference key="3">
    <citation type="journal article" date="2004" name="Genome Res.">
        <title>The status, quality, and expansion of the NIH full-length cDNA project: the Mammalian Gene Collection (MGC).</title>
        <authorList>
            <consortium name="The MGC Project Team"/>
        </authorList>
    </citation>
    <scope>NUCLEOTIDE SEQUENCE [LARGE SCALE MRNA]</scope>
    <source>
        <tissue>Pituitary</tissue>
    </source>
</reference>
<organism>
    <name type="scientific">Rattus norvegicus</name>
    <name type="common">Rat</name>
    <dbReference type="NCBI Taxonomy" id="10116"/>
    <lineage>
        <taxon>Eukaryota</taxon>
        <taxon>Metazoa</taxon>
        <taxon>Chordata</taxon>
        <taxon>Craniata</taxon>
        <taxon>Vertebrata</taxon>
        <taxon>Euteleostomi</taxon>
        <taxon>Mammalia</taxon>
        <taxon>Eutheria</taxon>
        <taxon>Euarchontoglires</taxon>
        <taxon>Glires</taxon>
        <taxon>Rodentia</taxon>
        <taxon>Myomorpha</taxon>
        <taxon>Muroidea</taxon>
        <taxon>Muridae</taxon>
        <taxon>Murinae</taxon>
        <taxon>Rattus</taxon>
    </lineage>
</organism>
<proteinExistence type="inferred from homology"/>
<protein>
    <recommendedName>
        <fullName>Glutaredoxin-1</fullName>
    </recommendedName>
    <alternativeName>
        <fullName>Thioltransferase-1</fullName>
        <shortName>TTase-1</shortName>
    </alternativeName>
</protein>
<feature type="initiator methionine" description="Removed" evidence="2">
    <location>
        <position position="1"/>
    </location>
</feature>
<feature type="chain" id="PRO_0000141604" description="Glutaredoxin-1">
    <location>
        <begin position="2"/>
        <end position="107"/>
    </location>
</feature>
<feature type="domain" description="Glutaredoxin" evidence="4">
    <location>
        <begin position="3"/>
        <end position="106"/>
    </location>
</feature>
<feature type="modified residue" description="N-acetylalanine" evidence="2">
    <location>
        <position position="2"/>
    </location>
</feature>
<feature type="modified residue" description="N6-succinyllysine" evidence="3">
    <location>
        <position position="9"/>
    </location>
</feature>
<feature type="disulfide bond" description="Redox-active" evidence="1">
    <location>
        <begin position="23"/>
        <end position="26"/>
    </location>
</feature>
<feature type="disulfide bond" evidence="1">
    <location>
        <begin position="79"/>
        <end position="83"/>
    </location>
</feature>
<feature type="sequence conflict" description="In Ref. 2; AAK07419." evidence="5" ref="2">
    <original>K</original>
    <variation>R</variation>
    <location>
        <position position="9"/>
    </location>
</feature>
<evidence type="ECO:0000250" key="1"/>
<evidence type="ECO:0000250" key="2">
    <source>
        <dbReference type="UniProtKB" id="P10575"/>
    </source>
</evidence>
<evidence type="ECO:0000250" key="3">
    <source>
        <dbReference type="UniProtKB" id="Q9QUH0"/>
    </source>
</evidence>
<evidence type="ECO:0000255" key="4">
    <source>
        <dbReference type="PROSITE-ProRule" id="PRU00686"/>
    </source>
</evidence>
<evidence type="ECO:0000305" key="5"/>
<sequence length="107" mass="11879">MAQEFVNCKIQSGKVVVFIKPTCPYCRKTQEILSQLPFKRGLLEFVDITATNNTNAIQDYLQQLTGARTVPRVFIGKDCIGGCSDLLSMQQNGELTARLKQIGALQL</sequence>
<gene>
    <name type="primary">Glrx</name>
    <name type="synonym">Glrx1</name>
    <name type="synonym">Grx</name>
</gene>
<keyword id="KW-0007">Acetylation</keyword>
<keyword id="KW-0963">Cytoplasm</keyword>
<keyword id="KW-1015">Disulfide bond</keyword>
<keyword id="KW-0249">Electron transport</keyword>
<keyword id="KW-0676">Redox-active center</keyword>
<keyword id="KW-1185">Reference proteome</keyword>
<keyword id="KW-0813">Transport</keyword>
<comment type="function">
    <text>Has a glutathione-disulfide oxidoreductase activity in the presence of NADPH and glutathione reductase. Reduces low molecular weight disulfides and proteins.</text>
</comment>
<comment type="subcellular location">
    <subcellularLocation>
        <location>Cytoplasm</location>
    </subcellularLocation>
</comment>
<comment type="similarity">
    <text evidence="5">Belongs to the glutaredoxin family.</text>
</comment>